<protein>
    <recommendedName>
        <fullName>Gastrula zinc finger protein XlCGF49.1</fullName>
    </recommendedName>
</protein>
<sequence>LGEKPFTCMECSKSFSQKSNLQTHYKIHTGEKPFTCMECGRTFSQKSTLLSHYKMHTGERPFSCSECGKSFSHKNKLTLHQKIHTGEKPYACTECGKRFPEKSKLKIHWKIHTREKPFSCTECGKKFSRESNLYFHQKMH</sequence>
<keyword id="KW-0238">DNA-binding</keyword>
<keyword id="KW-0479">Metal-binding</keyword>
<keyword id="KW-0539">Nucleus</keyword>
<keyword id="KW-1185">Reference proteome</keyword>
<keyword id="KW-0677">Repeat</keyword>
<keyword id="KW-0804">Transcription</keyword>
<keyword id="KW-0805">Transcription regulation</keyword>
<keyword id="KW-0862">Zinc</keyword>
<keyword id="KW-0863">Zinc-finger</keyword>
<accession>P18724</accession>
<reference key="1">
    <citation type="journal article" date="1989" name="J. Mol. Biol.">
        <title>Second-order repeats in Xenopus laevis finger proteins.</title>
        <authorList>
            <person name="Nietfeld W."/>
            <person name="El-Baradi T."/>
            <person name="Mentzel H."/>
            <person name="Pieler T."/>
            <person name="Koester M."/>
            <person name="Poeting A."/>
            <person name="Knoechel W."/>
        </authorList>
    </citation>
    <scope>NUCLEOTIDE SEQUENCE</scope>
</reference>
<comment type="function">
    <text>May be involved in transcriptional regulation.</text>
</comment>
<comment type="subcellular location">
    <subcellularLocation>
        <location evidence="2">Nucleus</location>
    </subcellularLocation>
</comment>
<comment type="similarity">
    <text evidence="2">Belongs to the krueppel C2H2-type zinc-finger protein family.</text>
</comment>
<name>ZG49_XENLA</name>
<dbReference type="PIR" id="S06574">
    <property type="entry name" value="S06574"/>
</dbReference>
<dbReference type="SMR" id="P18724"/>
<dbReference type="Proteomes" id="UP000186698">
    <property type="component" value="Unplaced"/>
</dbReference>
<dbReference type="GO" id="GO:0005634">
    <property type="term" value="C:nucleus"/>
    <property type="evidence" value="ECO:0007669"/>
    <property type="project" value="UniProtKB-SubCell"/>
</dbReference>
<dbReference type="GO" id="GO:0000981">
    <property type="term" value="F:DNA-binding transcription factor activity, RNA polymerase II-specific"/>
    <property type="evidence" value="ECO:0007669"/>
    <property type="project" value="TreeGrafter"/>
</dbReference>
<dbReference type="GO" id="GO:0000978">
    <property type="term" value="F:RNA polymerase II cis-regulatory region sequence-specific DNA binding"/>
    <property type="evidence" value="ECO:0007669"/>
    <property type="project" value="TreeGrafter"/>
</dbReference>
<dbReference type="GO" id="GO:0008270">
    <property type="term" value="F:zinc ion binding"/>
    <property type="evidence" value="ECO:0007669"/>
    <property type="project" value="UniProtKB-KW"/>
</dbReference>
<dbReference type="FunFam" id="3.30.160.60:FF:001430">
    <property type="entry name" value="Uncharacterized protein"/>
    <property type="match status" value="1"/>
</dbReference>
<dbReference type="FunFam" id="3.30.160.60:FF:000966">
    <property type="entry name" value="ZFP90 zinc finger protein"/>
    <property type="match status" value="1"/>
</dbReference>
<dbReference type="FunFam" id="3.30.160.60:FF:000759">
    <property type="entry name" value="zinc finger protein 16"/>
    <property type="match status" value="1"/>
</dbReference>
<dbReference type="FunFam" id="3.30.160.60:FF:002716">
    <property type="entry name" value="Zinc finger protein 212"/>
    <property type="match status" value="2"/>
</dbReference>
<dbReference type="Gene3D" id="3.30.160.60">
    <property type="entry name" value="Classic Zinc Finger"/>
    <property type="match status" value="5"/>
</dbReference>
<dbReference type="InterPro" id="IPR050527">
    <property type="entry name" value="Snail/Krueppel_Znf"/>
</dbReference>
<dbReference type="InterPro" id="IPR036236">
    <property type="entry name" value="Znf_C2H2_sf"/>
</dbReference>
<dbReference type="InterPro" id="IPR013087">
    <property type="entry name" value="Znf_C2H2_type"/>
</dbReference>
<dbReference type="PANTHER" id="PTHR24388">
    <property type="entry name" value="ZINC FINGER PROTEIN"/>
    <property type="match status" value="1"/>
</dbReference>
<dbReference type="PANTHER" id="PTHR24388:SF50">
    <property type="entry name" value="ZINC FINGER PROTEIN 646"/>
    <property type="match status" value="1"/>
</dbReference>
<dbReference type="Pfam" id="PF00096">
    <property type="entry name" value="zf-C2H2"/>
    <property type="match status" value="5"/>
</dbReference>
<dbReference type="SMART" id="SM00355">
    <property type="entry name" value="ZnF_C2H2"/>
    <property type="match status" value="5"/>
</dbReference>
<dbReference type="SUPFAM" id="SSF57667">
    <property type="entry name" value="beta-beta-alpha zinc fingers"/>
    <property type="match status" value="3"/>
</dbReference>
<dbReference type="PROSITE" id="PS00028">
    <property type="entry name" value="ZINC_FINGER_C2H2_1"/>
    <property type="match status" value="5"/>
</dbReference>
<dbReference type="PROSITE" id="PS50157">
    <property type="entry name" value="ZINC_FINGER_C2H2_2"/>
    <property type="match status" value="5"/>
</dbReference>
<feature type="chain" id="PRO_0000047797" description="Gastrula zinc finger protein XlCGF49.1">
    <location>
        <begin position="1" status="less than"/>
        <end position="140" status="greater than"/>
    </location>
</feature>
<feature type="zinc finger region" description="C2H2-type 1" evidence="1">
    <location>
        <begin position="6"/>
        <end position="28"/>
    </location>
</feature>
<feature type="zinc finger region" description="C2H2-type 2" evidence="1">
    <location>
        <begin position="34"/>
        <end position="56"/>
    </location>
</feature>
<feature type="zinc finger region" description="C2H2-type 3" evidence="1">
    <location>
        <begin position="62"/>
        <end position="84"/>
    </location>
</feature>
<feature type="zinc finger region" description="C2H2-type 4" evidence="1">
    <location>
        <begin position="90"/>
        <end position="112"/>
    </location>
</feature>
<feature type="zinc finger region" description="C2H2-type 5" evidence="1">
    <location>
        <begin position="118"/>
        <end position="140"/>
    </location>
</feature>
<feature type="non-terminal residue">
    <location>
        <position position="1"/>
    </location>
</feature>
<feature type="non-terminal residue">
    <location>
        <position position="140"/>
    </location>
</feature>
<proteinExistence type="inferred from homology"/>
<evidence type="ECO:0000255" key="1">
    <source>
        <dbReference type="PROSITE-ProRule" id="PRU00042"/>
    </source>
</evidence>
<evidence type="ECO:0000305" key="2"/>
<organism>
    <name type="scientific">Xenopus laevis</name>
    <name type="common">African clawed frog</name>
    <dbReference type="NCBI Taxonomy" id="8355"/>
    <lineage>
        <taxon>Eukaryota</taxon>
        <taxon>Metazoa</taxon>
        <taxon>Chordata</taxon>
        <taxon>Craniata</taxon>
        <taxon>Vertebrata</taxon>
        <taxon>Euteleostomi</taxon>
        <taxon>Amphibia</taxon>
        <taxon>Batrachia</taxon>
        <taxon>Anura</taxon>
        <taxon>Pipoidea</taxon>
        <taxon>Pipidae</taxon>
        <taxon>Xenopodinae</taxon>
        <taxon>Xenopus</taxon>
        <taxon>Xenopus</taxon>
    </lineage>
</organism>